<dbReference type="EMBL" id="AP006618">
    <property type="protein sequence ID" value="BAD55635.1"/>
    <property type="molecule type" value="Genomic_DNA"/>
</dbReference>
<dbReference type="RefSeq" id="WP_011207321.1">
    <property type="nucleotide sequence ID" value="NC_006361.1"/>
</dbReference>
<dbReference type="SMR" id="Q5Z1Q6"/>
<dbReference type="STRING" id="247156.NFA_7900"/>
<dbReference type="GeneID" id="61131621"/>
<dbReference type="KEGG" id="nfa:NFA_7900"/>
<dbReference type="eggNOG" id="COG0256">
    <property type="taxonomic scope" value="Bacteria"/>
</dbReference>
<dbReference type="HOGENOM" id="CLU_098841_0_1_11"/>
<dbReference type="OrthoDB" id="9810939at2"/>
<dbReference type="Proteomes" id="UP000006820">
    <property type="component" value="Chromosome"/>
</dbReference>
<dbReference type="GO" id="GO:0022625">
    <property type="term" value="C:cytosolic large ribosomal subunit"/>
    <property type="evidence" value="ECO:0007669"/>
    <property type="project" value="TreeGrafter"/>
</dbReference>
<dbReference type="GO" id="GO:0008097">
    <property type="term" value="F:5S rRNA binding"/>
    <property type="evidence" value="ECO:0007669"/>
    <property type="project" value="TreeGrafter"/>
</dbReference>
<dbReference type="GO" id="GO:0003735">
    <property type="term" value="F:structural constituent of ribosome"/>
    <property type="evidence" value="ECO:0007669"/>
    <property type="project" value="InterPro"/>
</dbReference>
<dbReference type="GO" id="GO:0006412">
    <property type="term" value="P:translation"/>
    <property type="evidence" value="ECO:0007669"/>
    <property type="project" value="UniProtKB-UniRule"/>
</dbReference>
<dbReference type="CDD" id="cd00432">
    <property type="entry name" value="Ribosomal_L18_L5e"/>
    <property type="match status" value="1"/>
</dbReference>
<dbReference type="FunFam" id="3.30.420.100:FF:000001">
    <property type="entry name" value="50S ribosomal protein L18"/>
    <property type="match status" value="1"/>
</dbReference>
<dbReference type="Gene3D" id="3.30.420.100">
    <property type="match status" value="1"/>
</dbReference>
<dbReference type="HAMAP" id="MF_01337_B">
    <property type="entry name" value="Ribosomal_uL18_B"/>
    <property type="match status" value="1"/>
</dbReference>
<dbReference type="InterPro" id="IPR004389">
    <property type="entry name" value="Ribosomal_uL18_bac-type"/>
</dbReference>
<dbReference type="InterPro" id="IPR005484">
    <property type="entry name" value="Ribosomal_uL18_bac/euk"/>
</dbReference>
<dbReference type="NCBIfam" id="TIGR00060">
    <property type="entry name" value="L18_bact"/>
    <property type="match status" value="1"/>
</dbReference>
<dbReference type="PANTHER" id="PTHR12899">
    <property type="entry name" value="39S RIBOSOMAL PROTEIN L18, MITOCHONDRIAL"/>
    <property type="match status" value="1"/>
</dbReference>
<dbReference type="PANTHER" id="PTHR12899:SF3">
    <property type="entry name" value="LARGE RIBOSOMAL SUBUNIT PROTEIN UL18M"/>
    <property type="match status" value="1"/>
</dbReference>
<dbReference type="Pfam" id="PF00861">
    <property type="entry name" value="Ribosomal_L18p"/>
    <property type="match status" value="1"/>
</dbReference>
<dbReference type="SUPFAM" id="SSF53137">
    <property type="entry name" value="Translational machinery components"/>
    <property type="match status" value="1"/>
</dbReference>
<organism>
    <name type="scientific">Nocardia farcinica (strain IFM 10152)</name>
    <dbReference type="NCBI Taxonomy" id="247156"/>
    <lineage>
        <taxon>Bacteria</taxon>
        <taxon>Bacillati</taxon>
        <taxon>Actinomycetota</taxon>
        <taxon>Actinomycetes</taxon>
        <taxon>Mycobacteriales</taxon>
        <taxon>Nocardiaceae</taxon>
        <taxon>Nocardia</taxon>
    </lineage>
</organism>
<comment type="function">
    <text evidence="1">This is one of the proteins that bind and probably mediate the attachment of the 5S RNA into the large ribosomal subunit, where it forms part of the central protuberance.</text>
</comment>
<comment type="subunit">
    <text evidence="1">Part of the 50S ribosomal subunit; part of the 5S rRNA/L5/L18/L25 subcomplex. Contacts the 5S and 23S rRNAs.</text>
</comment>
<comment type="similarity">
    <text evidence="1">Belongs to the universal ribosomal protein uL18 family.</text>
</comment>
<feature type="chain" id="PRO_0000131310" description="Large ribosomal subunit protein uL18">
    <location>
        <begin position="1"/>
        <end position="135"/>
    </location>
</feature>
<feature type="region of interest" description="Disordered" evidence="2">
    <location>
        <begin position="1"/>
        <end position="25"/>
    </location>
</feature>
<proteinExistence type="inferred from homology"/>
<keyword id="KW-1185">Reference proteome</keyword>
<keyword id="KW-0687">Ribonucleoprotein</keyword>
<keyword id="KW-0689">Ribosomal protein</keyword>
<keyword id="KW-0694">RNA-binding</keyword>
<keyword id="KW-0699">rRNA-binding</keyword>
<protein>
    <recommendedName>
        <fullName evidence="1">Large ribosomal subunit protein uL18</fullName>
    </recommendedName>
    <alternativeName>
        <fullName evidence="3">50S ribosomal protein L18</fullName>
    </alternativeName>
</protein>
<accession>Q5Z1Q6</accession>
<gene>
    <name evidence="1" type="primary">rplR</name>
    <name type="ordered locus">NFA_7900</name>
</gene>
<evidence type="ECO:0000255" key="1">
    <source>
        <dbReference type="HAMAP-Rule" id="MF_01337"/>
    </source>
</evidence>
<evidence type="ECO:0000256" key="2">
    <source>
        <dbReference type="SAM" id="MobiDB-lite"/>
    </source>
</evidence>
<evidence type="ECO:0000305" key="3"/>
<sequence>MAQTENQKSKRIPLGKDVSTQRRLSKARRHFRLRKKIAGTTERPRLVVHRSSRHLHAQLVDDTVGKTIAAASSIEPDVRAVEGDKTAKGKKVGELIAARAKAAGVEAVVFDRGGHDYHGRIAALADAAREGGLKF</sequence>
<reference key="1">
    <citation type="journal article" date="2004" name="Proc. Natl. Acad. Sci. U.S.A.">
        <title>The complete genomic sequence of Nocardia farcinica IFM 10152.</title>
        <authorList>
            <person name="Ishikawa J."/>
            <person name="Yamashita A."/>
            <person name="Mikami Y."/>
            <person name="Hoshino Y."/>
            <person name="Kurita H."/>
            <person name="Hotta K."/>
            <person name="Shiba T."/>
            <person name="Hattori M."/>
        </authorList>
    </citation>
    <scope>NUCLEOTIDE SEQUENCE [LARGE SCALE GENOMIC DNA]</scope>
    <source>
        <strain>IFM 10152</strain>
    </source>
</reference>
<name>RL18_NOCFA</name>